<organism>
    <name type="scientific">Treponema pallidum (strain Nichols)</name>
    <dbReference type="NCBI Taxonomy" id="243276"/>
    <lineage>
        <taxon>Bacteria</taxon>
        <taxon>Pseudomonadati</taxon>
        <taxon>Spirochaetota</taxon>
        <taxon>Spirochaetia</taxon>
        <taxon>Spirochaetales</taxon>
        <taxon>Treponemataceae</taxon>
        <taxon>Treponema</taxon>
    </lineage>
</organism>
<comment type="subcellular location">
    <subcellularLocation>
        <location evidence="2">Membrane</location>
        <topology evidence="2">Single-pass membrane protein</topology>
    </subcellularLocation>
</comment>
<dbReference type="EMBL" id="AE000520">
    <property type="protein sequence ID" value="AAC65089.1"/>
    <property type="molecule type" value="Genomic_DNA"/>
</dbReference>
<dbReference type="PIR" id="F71368">
    <property type="entry name" value="F71368"/>
</dbReference>
<dbReference type="SMR" id="O83131"/>
<dbReference type="STRING" id="243276.TP_0093"/>
<dbReference type="EnsemblBacteria" id="AAC65089">
    <property type="protein sequence ID" value="AAC65089"/>
    <property type="gene ID" value="TP_0093"/>
</dbReference>
<dbReference type="KEGG" id="tpa:TP_0093"/>
<dbReference type="KEGG" id="tpw:TPANIC_0093"/>
<dbReference type="eggNOG" id="ENOG5032N9X">
    <property type="taxonomic scope" value="Bacteria"/>
</dbReference>
<dbReference type="HOGENOM" id="CLU_1282735_0_0_12"/>
<dbReference type="OrthoDB" id="7549755at2"/>
<dbReference type="Proteomes" id="UP000000811">
    <property type="component" value="Chromosome"/>
</dbReference>
<dbReference type="GO" id="GO:0016020">
    <property type="term" value="C:membrane"/>
    <property type="evidence" value="ECO:0007669"/>
    <property type="project" value="UniProtKB-SubCell"/>
</dbReference>
<dbReference type="Gene3D" id="1.10.10.1320">
    <property type="entry name" value="Anti-sigma factor, zinc-finger domain"/>
    <property type="match status" value="1"/>
</dbReference>
<dbReference type="InterPro" id="IPR041916">
    <property type="entry name" value="Anti_sigma_zinc_sf"/>
</dbReference>
<keyword id="KW-0472">Membrane</keyword>
<keyword id="KW-1185">Reference proteome</keyword>
<keyword id="KW-0812">Transmembrane</keyword>
<keyword id="KW-1133">Transmembrane helix</keyword>
<gene>
    <name type="ordered locus">TP_0093</name>
</gene>
<proteinExistence type="predicted"/>
<protein>
    <recommendedName>
        <fullName>Uncharacterized protein TP_0093</fullName>
    </recommendedName>
</protein>
<evidence type="ECO:0000255" key="1"/>
<evidence type="ECO:0000305" key="2"/>
<feature type="chain" id="PRO_0000202189" description="Uncharacterized protein TP_0093">
    <location>
        <begin position="1"/>
        <end position="215"/>
    </location>
</feature>
<feature type="transmembrane region" description="Helical" evidence="1">
    <location>
        <begin position="98"/>
        <end position="119"/>
    </location>
</feature>
<accession>O83131</accession>
<name>Y093_TREPA</name>
<sequence>MRTCPDCAAWCAYVDGEGSQLQRREMCAHLQGCTHCATCVAHYRAMRSLVKHADRVSSRDFTMAFPYLRVRHRVASCMPRPWWQARSSPLSAAGPVRAAALAVAVASLCVCTLLLTHIVERRPVSRAGEASFTPIVPMRVRAPVGYARGVKVFGPAVSANSNVLRKPAAVFTVCAFAQLYGSDPAYEMETVPVRLSVIPVPSYVLNASKAQFFSP</sequence>
<reference key="1">
    <citation type="journal article" date="1998" name="Science">
        <title>Complete genome sequence of Treponema pallidum, the syphilis spirochete.</title>
        <authorList>
            <person name="Fraser C.M."/>
            <person name="Norris S.J."/>
            <person name="Weinstock G.M."/>
            <person name="White O."/>
            <person name="Sutton G.G."/>
            <person name="Dodson R.J."/>
            <person name="Gwinn M.L."/>
            <person name="Hickey E.K."/>
            <person name="Clayton R.A."/>
            <person name="Ketchum K.A."/>
            <person name="Sodergren E."/>
            <person name="Hardham J.M."/>
            <person name="McLeod M.P."/>
            <person name="Salzberg S.L."/>
            <person name="Peterson J.D."/>
            <person name="Khalak H.G."/>
            <person name="Richardson D.L."/>
            <person name="Howell J.K."/>
            <person name="Chidambaram M."/>
            <person name="Utterback T.R."/>
            <person name="McDonald L.A."/>
            <person name="Artiach P."/>
            <person name="Bowman C."/>
            <person name="Cotton M.D."/>
            <person name="Fujii C."/>
            <person name="Garland S.A."/>
            <person name="Hatch B."/>
            <person name="Horst K."/>
            <person name="Roberts K.M."/>
            <person name="Sandusky M."/>
            <person name="Weidman J.F."/>
            <person name="Smith H.O."/>
            <person name="Venter J.C."/>
        </authorList>
    </citation>
    <scope>NUCLEOTIDE SEQUENCE [LARGE SCALE GENOMIC DNA]</scope>
    <source>
        <strain>Nichols</strain>
    </source>
</reference>